<gene>
    <name type="primary">HDDC3</name>
    <name type="synonym">MESH1</name>
</gene>
<sequence>MGSEAAQLLEAADFAARKHRQQRRKDPEGTPYINHPIGVARILTHEAGITDIVVLQAALLHDTVEDTDTTLDEVELHFGAQVRRLVEEVTDDKTLPKLERKRLQVEQAPHSSPGAKLVKLADKLYNLRDLNRCTPEGWSEHRVQEYFEWAAQVVKGLQGTNRQLEEALKHLFKQRGLTI</sequence>
<evidence type="ECO:0000255" key="1">
    <source>
        <dbReference type="PROSITE-ProRule" id="PRU01175"/>
    </source>
</evidence>
<evidence type="ECO:0000269" key="2">
    <source>
    </source>
</evidence>
<evidence type="ECO:0000303" key="3">
    <source>
    </source>
</evidence>
<evidence type="ECO:0000305" key="4"/>
<evidence type="ECO:0000305" key="5">
    <source>
    </source>
</evidence>
<evidence type="ECO:0007744" key="6">
    <source>
    </source>
</evidence>
<evidence type="ECO:0007744" key="7">
    <source>
    </source>
</evidence>
<evidence type="ECO:0007829" key="8">
    <source>
        <dbReference type="PDB" id="3NR1"/>
    </source>
</evidence>
<feature type="initiator methionine" description="Removed" evidence="6">
    <location>
        <position position="1"/>
    </location>
</feature>
<feature type="chain" id="PRO_0000263110" description="Guanosine-3',5'-bis(diphosphate) 3'-pyrophosphohydrolase MESH1">
    <location>
        <begin position="2"/>
        <end position="179"/>
    </location>
</feature>
<feature type="domain" description="HD" evidence="1">
    <location>
        <begin position="32"/>
        <end position="127"/>
    </location>
</feature>
<feature type="active site" description="Nucleophile" evidence="5">
    <location>
        <position position="65"/>
    </location>
</feature>
<feature type="active site" description="Nucleophile" evidence="5">
    <location>
        <position position="66"/>
    </location>
</feature>
<feature type="binding site">
    <location>
        <position position="35"/>
    </location>
    <ligand>
        <name>Mn(2+)</name>
        <dbReference type="ChEBI" id="CHEBI:29035"/>
    </ligand>
</feature>
<feature type="binding site">
    <location>
        <position position="61"/>
    </location>
    <ligand>
        <name>Mn(2+)</name>
        <dbReference type="ChEBI" id="CHEBI:29035"/>
    </ligand>
</feature>
<feature type="binding site">
    <location>
        <position position="62"/>
    </location>
    <ligand>
        <name>Mn(2+)</name>
        <dbReference type="ChEBI" id="CHEBI:29035"/>
    </ligand>
</feature>
<feature type="binding site">
    <location>
        <position position="122"/>
    </location>
    <ligand>
        <name>Mn(2+)</name>
        <dbReference type="ChEBI" id="CHEBI:29035"/>
    </ligand>
</feature>
<feature type="modified residue" description="N-acetylglycine" evidence="6">
    <location>
        <position position="2"/>
    </location>
</feature>
<feature type="modified residue" description="N6-acetyllysine" evidence="7">
    <location>
        <position position="25"/>
    </location>
</feature>
<feature type="modified residue" description="N6-acetyllysine" evidence="7">
    <location>
        <position position="97"/>
    </location>
</feature>
<feature type="modified residue" description="N6-acetyllysine" evidence="7">
    <location>
        <position position="123"/>
    </location>
</feature>
<feature type="splice variant" id="VSP_021866" description="In isoform 2." evidence="3">
    <original>GWSE</original>
    <variation>VKIQ</variation>
    <location>
        <begin position="137"/>
        <end position="140"/>
    </location>
</feature>
<feature type="splice variant" id="VSP_021867" description="In isoform 2." evidence="3">
    <location>
        <begin position="141"/>
        <end position="179"/>
    </location>
</feature>
<feature type="mutagenesis site" description="Abrogates ppGpp hydrolase activity." evidence="2">
    <original>R</original>
    <variation>A</variation>
    <location>
        <position position="24"/>
    </location>
</feature>
<feature type="mutagenesis site" description="Abrogates ppGpp hydrolase activity." evidence="2">
    <original>E</original>
    <variation>A</variation>
    <location>
        <position position="65"/>
    </location>
</feature>
<feature type="mutagenesis site" description="Reduces ppGpp hydrolase activity." evidence="2">
    <original>D</original>
    <variation>A</variation>
    <location>
        <position position="66"/>
    </location>
</feature>
<feature type="helix" evidence="8">
    <location>
        <begin position="4"/>
        <end position="18"/>
    </location>
</feature>
<feature type="turn" evidence="8">
    <location>
        <begin position="19"/>
        <end position="21"/>
    </location>
</feature>
<feature type="helix" evidence="8">
    <location>
        <begin position="34"/>
        <end position="45"/>
    </location>
</feature>
<feature type="helix" evidence="8">
    <location>
        <begin position="52"/>
        <end position="60"/>
    </location>
</feature>
<feature type="helix" evidence="8">
    <location>
        <begin position="63"/>
        <end position="66"/>
    </location>
</feature>
<feature type="helix" evidence="8">
    <location>
        <begin position="71"/>
        <end position="88"/>
    </location>
</feature>
<feature type="helix" evidence="8">
    <location>
        <begin position="97"/>
        <end position="107"/>
    </location>
</feature>
<feature type="helix" evidence="8">
    <location>
        <begin position="108"/>
        <end position="110"/>
    </location>
</feature>
<feature type="helix" evidence="8">
    <location>
        <begin position="113"/>
        <end position="132"/>
    </location>
</feature>
<feature type="helix" evidence="8">
    <location>
        <begin position="140"/>
        <end position="157"/>
    </location>
</feature>
<feature type="helix" evidence="8">
    <location>
        <begin position="162"/>
        <end position="173"/>
    </location>
</feature>
<feature type="turn" evidence="8">
    <location>
        <begin position="174"/>
        <end position="176"/>
    </location>
</feature>
<keyword id="KW-0002">3D-structure</keyword>
<keyword id="KW-0007">Acetylation</keyword>
<keyword id="KW-0025">Alternative splicing</keyword>
<keyword id="KW-0378">Hydrolase</keyword>
<keyword id="KW-0464">Manganese</keyword>
<keyword id="KW-0479">Metal-binding</keyword>
<keyword id="KW-1267">Proteomics identification</keyword>
<keyword id="KW-1185">Reference proteome</keyword>
<name>MESH1_HUMAN</name>
<protein>
    <recommendedName>
        <fullName>Guanosine-3',5'-bis(diphosphate) 3'-pyrophosphohydrolase MESH1</fullName>
        <ecNumber>3.1.7.2</ecNumber>
    </recommendedName>
    <alternativeName>
        <fullName>HD domain-containing protein 3</fullName>
    </alternativeName>
    <alternativeName>
        <fullName>Metazoan SpoT homolog 1</fullName>
        <shortName>MESH1</shortName>
    </alternativeName>
    <alternativeName>
        <fullName>Penta-phosphate guanosine-3'-pyrophosphohydrolase</fullName>
        <shortName>(ppGpp)ase</shortName>
    </alternativeName>
</protein>
<comment type="function">
    <text evidence="2">ppGpp hydrolyzing enzyme involved in starvation response.</text>
</comment>
<comment type="catalytic activity">
    <reaction evidence="2">
        <text>guanosine 3',5'-bis(diphosphate) + H2O = GDP + diphosphate + H(+)</text>
        <dbReference type="Rhea" id="RHEA:14253"/>
        <dbReference type="ChEBI" id="CHEBI:15377"/>
        <dbReference type="ChEBI" id="CHEBI:15378"/>
        <dbReference type="ChEBI" id="CHEBI:33019"/>
        <dbReference type="ChEBI" id="CHEBI:58189"/>
        <dbReference type="ChEBI" id="CHEBI:77828"/>
        <dbReference type="EC" id="3.1.7.2"/>
    </reaction>
</comment>
<comment type="cofactor">
    <cofactor evidence="2">
        <name>Mn(2+)</name>
        <dbReference type="ChEBI" id="CHEBI:29035"/>
    </cofactor>
</comment>
<comment type="interaction">
    <interactant intactId="EBI-750003">
        <id>Q8N4P3</id>
    </interactant>
    <interactant intactId="EBI-2548868">
        <id>P0C7W6</id>
        <label>CCDC172</label>
    </interactant>
    <organismsDiffer>false</organismsDiffer>
    <experiments>4</experiments>
</comment>
<comment type="interaction">
    <interactant intactId="EBI-750003">
        <id>Q8N4P3</id>
    </interactant>
    <interactant intactId="EBI-10181988">
        <id>Q8IYX8-2</id>
        <label>CEP57L1</label>
    </interactant>
    <organismsDiffer>false</organismsDiffer>
    <experiments>3</experiments>
</comment>
<comment type="interaction">
    <interactant intactId="EBI-750003">
        <id>Q8N4P3</id>
    </interactant>
    <interactant intactId="EBI-949824">
        <id>O00471</id>
        <label>EXOC5</label>
    </interactant>
    <organismsDiffer>false</organismsDiffer>
    <experiments>3</experiments>
</comment>
<comment type="interaction">
    <interactant intactId="EBI-750003">
        <id>Q8N4P3</id>
    </interactant>
    <interactant intactId="EBI-743722">
        <id>Q5VSY0</id>
        <label>GKAP1</label>
    </interactant>
    <organismsDiffer>false</organismsDiffer>
    <experiments>3</experiments>
</comment>
<comment type="interaction">
    <interactant intactId="EBI-750003">
        <id>Q8N4P3</id>
    </interactant>
    <interactant intactId="EBI-10181276">
        <id>Q0D2H9</id>
        <label>GOLGA8DP</label>
    </interactant>
    <organismsDiffer>false</organismsDiffer>
    <experiments>3</experiments>
</comment>
<comment type="interaction">
    <interactant intactId="EBI-750003">
        <id>Q8N4P3</id>
    </interactant>
    <interactant intactId="EBI-10181260">
        <id>Q08AF8</id>
        <label>GOLGA8G</label>
    </interactant>
    <organismsDiffer>false</organismsDiffer>
    <experiments>3</experiments>
</comment>
<comment type="interaction">
    <interactant intactId="EBI-750003">
        <id>Q8N4P3</id>
    </interactant>
    <interactant intactId="EBI-372942">
        <id>Q13287</id>
        <label>NMI</label>
    </interactant>
    <organismsDiffer>false</organismsDiffer>
    <experiments>7</experiments>
</comment>
<comment type="interaction">
    <interactant intactId="EBI-750003">
        <id>Q8N4P3</id>
    </interactant>
    <interactant intactId="EBI-357849">
        <id>Q15025</id>
        <label>TNIP1</label>
    </interactant>
    <organismsDiffer>false</organismsDiffer>
    <experiments>5</experiments>
</comment>
<comment type="interaction">
    <interactant intactId="EBI-750003">
        <id>Q8N4P3</id>
    </interactant>
    <interactant intactId="EBI-10184033">
        <id>Q5VU62</id>
        <label>TPM3</label>
    </interactant>
    <organismsDiffer>false</organismsDiffer>
    <experiments>3</experiments>
</comment>
<comment type="interaction">
    <interactant intactId="EBI-12037393">
        <id>Q8N4P3-2</id>
    </interactant>
    <interactant intactId="EBI-11745576">
        <id>Q6PJH3</id>
        <label>AKAP9</label>
    </interactant>
    <organismsDiffer>false</organismsDiffer>
    <experiments>3</experiments>
</comment>
<comment type="interaction">
    <interactant intactId="EBI-12037393">
        <id>Q8N4P3-2</id>
    </interactant>
    <interactant intactId="EBI-10175300">
        <id>Q8TD31-3</id>
        <label>CCHCR1</label>
    </interactant>
    <organismsDiffer>false</organismsDiffer>
    <experiments>3</experiments>
</comment>
<comment type="interaction">
    <interactant intactId="EBI-12037393">
        <id>Q8N4P3-2</id>
    </interactant>
    <interactant intactId="EBI-743122">
        <id>P43358</id>
        <label>MAGEA4</label>
    </interactant>
    <organismsDiffer>false</organismsDiffer>
    <experiments>3</experiments>
</comment>
<comment type="interaction">
    <interactant intactId="EBI-12037393">
        <id>Q8N4P3-2</id>
    </interactant>
    <interactant intactId="EBI-2340176">
        <id>Q9BUK6</id>
        <label>MSTO1</label>
    </interactant>
    <organismsDiffer>false</organismsDiffer>
    <experiments>3</experiments>
</comment>
<comment type="interaction">
    <interactant intactId="EBI-12037393">
        <id>Q8N4P3-2</id>
    </interactant>
    <interactant intactId="EBI-372942">
        <id>Q13287</id>
        <label>NMI</label>
    </interactant>
    <organismsDiffer>false</organismsDiffer>
    <experiments>6</experiments>
</comment>
<comment type="alternative products">
    <event type="alternative splicing"/>
    <isoform>
        <id>Q8N4P3-1</id>
        <name>1</name>
        <sequence type="displayed"/>
    </isoform>
    <isoform>
        <id>Q8N4P3-2</id>
        <name>2</name>
        <sequence type="described" ref="VSP_021866 VSP_021867"/>
    </isoform>
</comment>
<comment type="similarity">
    <text evidence="4">Belongs to the MESH1 family.</text>
</comment>
<dbReference type="EC" id="3.1.7.2"/>
<dbReference type="EMBL" id="AC068831">
    <property type="status" value="NOT_ANNOTATED_CDS"/>
    <property type="molecule type" value="Genomic_DNA"/>
</dbReference>
<dbReference type="EMBL" id="BC033794">
    <property type="protein sequence ID" value="AAH33794.1"/>
    <property type="molecule type" value="mRNA"/>
</dbReference>
<dbReference type="CCDS" id="CCDS10366.1">
    <molecule id="Q8N4P3-2"/>
</dbReference>
<dbReference type="CCDS" id="CCDS66866.1">
    <molecule id="Q8N4P3-1"/>
</dbReference>
<dbReference type="RefSeq" id="NP_001273380.1">
    <molecule id="Q8N4P3-1"/>
    <property type="nucleotide sequence ID" value="NM_001286451.2"/>
</dbReference>
<dbReference type="RefSeq" id="NP_940929.1">
    <molecule id="Q8N4P3-2"/>
    <property type="nucleotide sequence ID" value="NM_198527.4"/>
</dbReference>
<dbReference type="RefSeq" id="XP_054233867.1">
    <molecule id="Q8N4P3-1"/>
    <property type="nucleotide sequence ID" value="XM_054377892.1"/>
</dbReference>
<dbReference type="RefSeq" id="XP_054233868.1">
    <molecule id="Q8N4P3-2"/>
    <property type="nucleotide sequence ID" value="XM_054377893.1"/>
</dbReference>
<dbReference type="PDB" id="3NR1">
    <property type="method" value="X-ray"/>
    <property type="resolution" value="1.90 A"/>
    <property type="chains" value="A/B=2-179"/>
</dbReference>
<dbReference type="PDB" id="5VXA">
    <property type="method" value="X-ray"/>
    <property type="resolution" value="2.10 A"/>
    <property type="chains" value="A/B=1-179"/>
</dbReference>
<dbReference type="PDBsum" id="3NR1"/>
<dbReference type="PDBsum" id="5VXA"/>
<dbReference type="SMR" id="Q8N4P3"/>
<dbReference type="BioGRID" id="131914">
    <property type="interactions" value="72"/>
</dbReference>
<dbReference type="FunCoup" id="Q8N4P3">
    <property type="interactions" value="411"/>
</dbReference>
<dbReference type="IntAct" id="Q8N4P3">
    <property type="interactions" value="50"/>
</dbReference>
<dbReference type="MINT" id="Q8N4P3"/>
<dbReference type="STRING" id="9606.ENSP00000377814"/>
<dbReference type="iPTMnet" id="Q8N4P3"/>
<dbReference type="PhosphoSitePlus" id="Q8N4P3"/>
<dbReference type="BioMuta" id="HDDC3"/>
<dbReference type="DMDM" id="122065202"/>
<dbReference type="jPOST" id="Q8N4P3"/>
<dbReference type="MassIVE" id="Q8N4P3"/>
<dbReference type="PaxDb" id="9606-ENSP00000377814"/>
<dbReference type="PeptideAtlas" id="Q8N4P3"/>
<dbReference type="ProteomicsDB" id="71953">
    <molecule id="Q8N4P3-1"/>
</dbReference>
<dbReference type="ProteomicsDB" id="71954">
    <molecule id="Q8N4P3-2"/>
</dbReference>
<dbReference type="Pumba" id="Q8N4P3"/>
<dbReference type="Antibodypedia" id="43848">
    <property type="antibodies" value="117 antibodies from 20 providers"/>
</dbReference>
<dbReference type="DNASU" id="374659"/>
<dbReference type="Ensembl" id="ENST00000330334.7">
    <molecule id="Q8N4P3-2"/>
    <property type="protein sequence ID" value="ENSP00000330721.3"/>
    <property type="gene ID" value="ENSG00000184508.12"/>
</dbReference>
<dbReference type="Ensembl" id="ENST00000394272.8">
    <molecule id="Q8N4P3-1"/>
    <property type="protein sequence ID" value="ENSP00000377814.4"/>
    <property type="gene ID" value="ENSG00000184508.12"/>
</dbReference>
<dbReference type="Ensembl" id="ENST00000646620.1">
    <molecule id="Q8N4P3-1"/>
    <property type="protein sequence ID" value="ENSP00000493549.1"/>
    <property type="gene ID" value="ENSG00000184508.12"/>
</dbReference>
<dbReference type="GeneID" id="374659"/>
<dbReference type="KEGG" id="hsa:374659"/>
<dbReference type="MANE-Select" id="ENST00000394272.8">
    <property type="protein sequence ID" value="ENSP00000377814.4"/>
    <property type="RefSeq nucleotide sequence ID" value="NM_001286451.2"/>
    <property type="RefSeq protein sequence ID" value="NP_001273380.1"/>
</dbReference>
<dbReference type="UCSC" id="uc002bqe.6">
    <molecule id="Q8N4P3-1"/>
    <property type="organism name" value="human"/>
</dbReference>
<dbReference type="AGR" id="HGNC:30522"/>
<dbReference type="CTD" id="374659"/>
<dbReference type="DisGeNET" id="374659"/>
<dbReference type="GeneCards" id="HDDC3"/>
<dbReference type="HGNC" id="HGNC:30522">
    <property type="gene designation" value="HDDC3"/>
</dbReference>
<dbReference type="HPA" id="ENSG00000184508">
    <property type="expression patterns" value="Low tissue specificity"/>
</dbReference>
<dbReference type="neXtProt" id="NX_Q8N4P3"/>
<dbReference type="OpenTargets" id="ENSG00000184508"/>
<dbReference type="PharmGKB" id="PA142671696"/>
<dbReference type="VEuPathDB" id="HostDB:ENSG00000184508"/>
<dbReference type="eggNOG" id="KOG1157">
    <property type="taxonomic scope" value="Eukaryota"/>
</dbReference>
<dbReference type="GeneTree" id="ENSGT00390000011608"/>
<dbReference type="HOGENOM" id="CLU_084517_1_0_1"/>
<dbReference type="InParanoid" id="Q8N4P3"/>
<dbReference type="OMA" id="PPWRERK"/>
<dbReference type="OrthoDB" id="430679at2759"/>
<dbReference type="PAN-GO" id="Q8N4P3">
    <property type="GO annotations" value="1 GO annotation based on evolutionary models"/>
</dbReference>
<dbReference type="PhylomeDB" id="Q8N4P3"/>
<dbReference type="TreeFam" id="TF313524"/>
<dbReference type="PathwayCommons" id="Q8N4P3"/>
<dbReference type="SignaLink" id="Q8N4P3"/>
<dbReference type="BioGRID-ORCS" id="374659">
    <property type="hits" value="14 hits in 1153 CRISPR screens"/>
</dbReference>
<dbReference type="EvolutionaryTrace" id="Q8N4P3"/>
<dbReference type="GenomeRNAi" id="374659"/>
<dbReference type="Pharos" id="Q8N4P3">
    <property type="development level" value="Tbio"/>
</dbReference>
<dbReference type="PRO" id="PR:Q8N4P3"/>
<dbReference type="Proteomes" id="UP000005640">
    <property type="component" value="Chromosome 15"/>
</dbReference>
<dbReference type="RNAct" id="Q8N4P3">
    <property type="molecule type" value="protein"/>
</dbReference>
<dbReference type="Bgee" id="ENSG00000184508">
    <property type="expression patterns" value="Expressed in parotid gland and 156 other cell types or tissues"/>
</dbReference>
<dbReference type="ExpressionAtlas" id="Q8N4P3">
    <property type="expression patterns" value="baseline and differential"/>
</dbReference>
<dbReference type="GO" id="GO:0008893">
    <property type="term" value="F:guanosine-3',5'-bis(diphosphate) 3'-diphosphatase activity"/>
    <property type="evidence" value="ECO:0000318"/>
    <property type="project" value="GO_Central"/>
</dbReference>
<dbReference type="GO" id="GO:0046872">
    <property type="term" value="F:metal ion binding"/>
    <property type="evidence" value="ECO:0007669"/>
    <property type="project" value="UniProtKB-KW"/>
</dbReference>
<dbReference type="CDD" id="cd00077">
    <property type="entry name" value="HDc"/>
    <property type="match status" value="1"/>
</dbReference>
<dbReference type="FunFam" id="1.10.3210.10:FF:000012">
    <property type="entry name" value="HD domain containing 3"/>
    <property type="match status" value="1"/>
</dbReference>
<dbReference type="Gene3D" id="1.10.3210.10">
    <property type="entry name" value="Hypothetical protein af1432"/>
    <property type="match status" value="1"/>
</dbReference>
<dbReference type="InterPro" id="IPR003607">
    <property type="entry name" value="HD/PDEase_dom"/>
</dbReference>
<dbReference type="InterPro" id="IPR006674">
    <property type="entry name" value="HD_domain"/>
</dbReference>
<dbReference type="InterPro" id="IPR052194">
    <property type="entry name" value="MESH1"/>
</dbReference>
<dbReference type="PANTHER" id="PTHR46246">
    <property type="entry name" value="GUANOSINE-3',5'-BIS(DIPHOSPHATE) 3'-PYROPHOSPHOHYDROLASE MESH1"/>
    <property type="match status" value="1"/>
</dbReference>
<dbReference type="PANTHER" id="PTHR46246:SF1">
    <property type="entry name" value="GUANOSINE-3',5'-BIS(DIPHOSPHATE) 3'-PYROPHOSPHOHYDROLASE MESH1"/>
    <property type="match status" value="1"/>
</dbReference>
<dbReference type="Pfam" id="PF13328">
    <property type="entry name" value="HD_4"/>
    <property type="match status" value="1"/>
</dbReference>
<dbReference type="SMART" id="SM00471">
    <property type="entry name" value="HDc"/>
    <property type="match status" value="1"/>
</dbReference>
<dbReference type="SUPFAM" id="SSF109604">
    <property type="entry name" value="HD-domain/PDEase-like"/>
    <property type="match status" value="1"/>
</dbReference>
<dbReference type="PROSITE" id="PS51831">
    <property type="entry name" value="HD"/>
    <property type="match status" value="1"/>
</dbReference>
<reference key="1">
    <citation type="journal article" date="2006" name="Nature">
        <title>Analysis of the DNA sequence and duplication history of human chromosome 15.</title>
        <authorList>
            <person name="Zody M.C."/>
            <person name="Garber M."/>
            <person name="Sharpe T."/>
            <person name="Young S.K."/>
            <person name="Rowen L."/>
            <person name="O'Neill K."/>
            <person name="Whittaker C.A."/>
            <person name="Kamal M."/>
            <person name="Chang J.L."/>
            <person name="Cuomo C.A."/>
            <person name="Dewar K."/>
            <person name="FitzGerald M.G."/>
            <person name="Kodira C.D."/>
            <person name="Madan A."/>
            <person name="Qin S."/>
            <person name="Yang X."/>
            <person name="Abbasi N."/>
            <person name="Abouelleil A."/>
            <person name="Arachchi H.M."/>
            <person name="Baradarani L."/>
            <person name="Birditt B."/>
            <person name="Bloom S."/>
            <person name="Bloom T."/>
            <person name="Borowsky M.L."/>
            <person name="Burke J."/>
            <person name="Butler J."/>
            <person name="Cook A."/>
            <person name="DeArellano K."/>
            <person name="DeCaprio D."/>
            <person name="Dorris L. III"/>
            <person name="Dors M."/>
            <person name="Eichler E.E."/>
            <person name="Engels R."/>
            <person name="Fahey J."/>
            <person name="Fleetwood P."/>
            <person name="Friedman C."/>
            <person name="Gearin G."/>
            <person name="Hall J.L."/>
            <person name="Hensley G."/>
            <person name="Johnson E."/>
            <person name="Jones C."/>
            <person name="Kamat A."/>
            <person name="Kaur A."/>
            <person name="Locke D.P."/>
            <person name="Madan A."/>
            <person name="Munson G."/>
            <person name="Jaffe D.B."/>
            <person name="Lui A."/>
            <person name="Macdonald P."/>
            <person name="Mauceli E."/>
            <person name="Naylor J.W."/>
            <person name="Nesbitt R."/>
            <person name="Nicol R."/>
            <person name="O'Leary S.B."/>
            <person name="Ratcliffe A."/>
            <person name="Rounsley S."/>
            <person name="She X."/>
            <person name="Sneddon K.M.B."/>
            <person name="Stewart S."/>
            <person name="Sougnez C."/>
            <person name="Stone S.M."/>
            <person name="Topham K."/>
            <person name="Vincent D."/>
            <person name="Wang S."/>
            <person name="Zimmer A.R."/>
            <person name="Birren B.W."/>
            <person name="Hood L."/>
            <person name="Lander E.S."/>
            <person name="Nusbaum C."/>
        </authorList>
    </citation>
    <scope>NUCLEOTIDE SEQUENCE [LARGE SCALE GENOMIC DNA]</scope>
</reference>
<reference key="2">
    <citation type="journal article" date="2004" name="Genome Res.">
        <title>The status, quality, and expansion of the NIH full-length cDNA project: the Mammalian Gene Collection (MGC).</title>
        <authorList>
            <consortium name="The MGC Project Team"/>
        </authorList>
    </citation>
    <scope>NUCLEOTIDE SEQUENCE [LARGE SCALE MRNA] (ISOFORM 2)</scope>
    <source>
        <tissue>Cervix</tissue>
    </source>
</reference>
<reference key="3">
    <citation type="journal article" date="2009" name="Anal. Chem.">
        <title>Lys-N and trypsin cover complementary parts of the phosphoproteome in a refined SCX-based approach.</title>
        <authorList>
            <person name="Gauci S."/>
            <person name="Helbig A.O."/>
            <person name="Slijper M."/>
            <person name="Krijgsveld J."/>
            <person name="Heck A.J."/>
            <person name="Mohammed S."/>
        </authorList>
    </citation>
    <scope>ACETYLATION [LARGE SCALE ANALYSIS] AT GLY-2</scope>
    <scope>CLEAVAGE OF INITIATOR METHIONINE [LARGE SCALE ANALYSIS]</scope>
    <scope>IDENTIFICATION BY MASS SPECTROMETRY [LARGE SCALE ANALYSIS]</scope>
</reference>
<reference key="4">
    <citation type="journal article" date="2009" name="Science">
        <title>Lysine acetylation targets protein complexes and co-regulates major cellular functions.</title>
        <authorList>
            <person name="Choudhary C."/>
            <person name="Kumar C."/>
            <person name="Gnad F."/>
            <person name="Nielsen M.L."/>
            <person name="Rehman M."/>
            <person name="Walther T.C."/>
            <person name="Olsen J.V."/>
            <person name="Mann M."/>
        </authorList>
    </citation>
    <scope>ACETYLATION [LARGE SCALE ANALYSIS] AT LYS-25; LYS-97 AND LYS-123</scope>
    <scope>IDENTIFICATION BY MASS SPECTROMETRY [LARGE SCALE ANALYSIS]</scope>
</reference>
<reference key="5">
    <citation type="journal article" date="2011" name="BMC Syst. Biol.">
        <title>Initial characterization of the human central proteome.</title>
        <authorList>
            <person name="Burkard T.R."/>
            <person name="Planyavsky M."/>
            <person name="Kaupe I."/>
            <person name="Breitwieser F.P."/>
            <person name="Buerckstuemmer T."/>
            <person name="Bennett K.L."/>
            <person name="Superti-Furga G."/>
            <person name="Colinge J."/>
        </authorList>
    </citation>
    <scope>IDENTIFICATION BY MASS SPECTROMETRY [LARGE SCALE ANALYSIS]</scope>
</reference>
<reference key="6">
    <citation type="journal article" date="2010" name="Nat. Struct. Mol. Biol.">
        <title>A metazoan ortholog of SpoT hydrolyzes ppGpp and functions in starvation responses.</title>
        <authorList>
            <person name="Sun D."/>
            <person name="Lee G."/>
            <person name="Lee J.H."/>
            <person name="Kim H.-Y."/>
            <person name="Rhee H.W."/>
            <person name="Park S.-Y."/>
            <person name="Kim K.J."/>
            <person name="Kim Y."/>
            <person name="Kim B.Y."/>
            <person name="Hong J.-I."/>
            <person name="Park C."/>
            <person name="Choy H.E."/>
            <person name="Kim J.H."/>
            <person name="Jeon Y.H."/>
            <person name="Chung J."/>
        </authorList>
    </citation>
    <scope>X-RAY CRYSTALLOGRAPHY (2.9 ANGSTROMS) OF 2-179</scope>
    <scope>FUNCTION</scope>
    <scope>CATALYTIC ACTIVITY</scope>
    <scope>ACTIVE SITE</scope>
    <scope>COFACTOR</scope>
    <scope>MUTAGENESIS OF ARG-24; GLU-65 AND ASP-66</scope>
    <scope>MANGANESE-BINDING SITES</scope>
</reference>
<proteinExistence type="evidence at protein level"/>
<organism>
    <name type="scientific">Homo sapiens</name>
    <name type="common">Human</name>
    <dbReference type="NCBI Taxonomy" id="9606"/>
    <lineage>
        <taxon>Eukaryota</taxon>
        <taxon>Metazoa</taxon>
        <taxon>Chordata</taxon>
        <taxon>Craniata</taxon>
        <taxon>Vertebrata</taxon>
        <taxon>Euteleostomi</taxon>
        <taxon>Mammalia</taxon>
        <taxon>Eutheria</taxon>
        <taxon>Euarchontoglires</taxon>
        <taxon>Primates</taxon>
        <taxon>Haplorrhini</taxon>
        <taxon>Catarrhini</taxon>
        <taxon>Hominidae</taxon>
        <taxon>Homo</taxon>
    </lineage>
</organism>
<accession>Q8N4P3</accession>